<keyword id="KW-1185">Reference proteome</keyword>
<gene>
    <name type="primary">hgh1</name>
    <name type="synonym">fam203a</name>
</gene>
<comment type="similarity">
    <text evidence="1">Belongs to the HGH1 family.</text>
</comment>
<evidence type="ECO:0000305" key="1"/>
<name>HGH1_XENLA</name>
<sequence length="356" mass="39911">MDPAMCSELLSFLKPETRADVRAQALEYILGVSGTPEGRQSLCAEPRLLQVVLDLTTEQSAHIAQDAHHVLVNLTSDPTTHKSLLGHVPTLLPSLLTLLQDPTCPFSDSTCTALCNLSREEESCQSFLQTLKQEGLCQLLHMLCTPKYNGHASLDYLGPLVCNLTQLPEGRDFILDRDRCVIQRLLPYVTAGSTVRKGGIVGTLRNCCFNHRDHEWLLSDQVDLLPFLLLPLAGGEEYTDEEMESLPPDLQYLPEDKERESDPDIRKMLIETVQLLCATAGGRRIVRQKGTYLIMRELHSWERESYVSRACEKLIQVLIGDEPEAGLENLMEVTVPPDLEETFTRVDQEDEGSLDQ</sequence>
<proteinExistence type="evidence at transcript level"/>
<accession>Q3KQ45</accession>
<reference key="1">
    <citation type="submission" date="2005-10" db="EMBL/GenBank/DDBJ databases">
        <authorList>
            <consortium name="NIH - Xenopus Gene Collection (XGC) project"/>
        </authorList>
    </citation>
    <scope>NUCLEOTIDE SEQUENCE [LARGE SCALE MRNA]</scope>
    <source>
        <tissue>Embryo</tissue>
    </source>
</reference>
<protein>
    <recommendedName>
        <fullName>Protein HGH1 homolog</fullName>
    </recommendedName>
</protein>
<dbReference type="EMBL" id="BC106390">
    <property type="protein sequence ID" value="AAI06391.1"/>
    <property type="molecule type" value="mRNA"/>
</dbReference>
<dbReference type="RefSeq" id="NP_001089715.1">
    <property type="nucleotide sequence ID" value="NM_001096246.1"/>
</dbReference>
<dbReference type="SMR" id="Q3KQ45"/>
<dbReference type="DNASU" id="734778"/>
<dbReference type="GeneID" id="734778"/>
<dbReference type="KEGG" id="xla:734778"/>
<dbReference type="AGR" id="Xenbase:XB-GENE-997810"/>
<dbReference type="CTD" id="734778"/>
<dbReference type="Xenbase" id="XB-GENE-997810">
    <property type="gene designation" value="hgh1.L"/>
</dbReference>
<dbReference type="OrthoDB" id="338814at2759"/>
<dbReference type="Proteomes" id="UP000186698">
    <property type="component" value="Chromosome 6L"/>
</dbReference>
<dbReference type="Bgee" id="734778">
    <property type="expression patterns" value="Expressed in oocyte and 19 other cell types or tissues"/>
</dbReference>
<dbReference type="Gene3D" id="1.25.10.10">
    <property type="entry name" value="Leucine-rich Repeat Variant"/>
    <property type="match status" value="1"/>
</dbReference>
<dbReference type="InterPro" id="IPR011989">
    <property type="entry name" value="ARM-like"/>
</dbReference>
<dbReference type="InterPro" id="IPR016024">
    <property type="entry name" value="ARM-type_fold"/>
</dbReference>
<dbReference type="InterPro" id="IPR039717">
    <property type="entry name" value="Hgh1"/>
</dbReference>
<dbReference type="InterPro" id="IPR007206">
    <property type="entry name" value="Protein_HGH1_C"/>
</dbReference>
<dbReference type="InterPro" id="IPR007205">
    <property type="entry name" value="Protein_HGH1_N"/>
</dbReference>
<dbReference type="PANTHER" id="PTHR13387">
    <property type="entry name" value="PROTEIN HGH1 HOMOLOG"/>
    <property type="match status" value="1"/>
</dbReference>
<dbReference type="PANTHER" id="PTHR13387:SF9">
    <property type="entry name" value="PROTEIN HGH1 HOMOLOG"/>
    <property type="match status" value="1"/>
</dbReference>
<dbReference type="Pfam" id="PF04063">
    <property type="entry name" value="DUF383"/>
    <property type="match status" value="1"/>
</dbReference>
<dbReference type="Pfam" id="PF04064">
    <property type="entry name" value="DUF384"/>
    <property type="match status" value="1"/>
</dbReference>
<dbReference type="SUPFAM" id="SSF48371">
    <property type="entry name" value="ARM repeat"/>
    <property type="match status" value="1"/>
</dbReference>
<organism>
    <name type="scientific">Xenopus laevis</name>
    <name type="common">African clawed frog</name>
    <dbReference type="NCBI Taxonomy" id="8355"/>
    <lineage>
        <taxon>Eukaryota</taxon>
        <taxon>Metazoa</taxon>
        <taxon>Chordata</taxon>
        <taxon>Craniata</taxon>
        <taxon>Vertebrata</taxon>
        <taxon>Euteleostomi</taxon>
        <taxon>Amphibia</taxon>
        <taxon>Batrachia</taxon>
        <taxon>Anura</taxon>
        <taxon>Pipoidea</taxon>
        <taxon>Pipidae</taxon>
        <taxon>Xenopodinae</taxon>
        <taxon>Xenopus</taxon>
        <taxon>Xenopus</taxon>
    </lineage>
</organism>
<feature type="chain" id="PRO_0000331581" description="Protein HGH1 homolog">
    <location>
        <begin position="1"/>
        <end position="356"/>
    </location>
</feature>